<comment type="catalytic activity">
    <reaction evidence="1">
        <text>D-serine = pyruvate + NH4(+)</text>
        <dbReference type="Rhea" id="RHEA:13977"/>
        <dbReference type="ChEBI" id="CHEBI:15361"/>
        <dbReference type="ChEBI" id="CHEBI:28938"/>
        <dbReference type="ChEBI" id="CHEBI:35247"/>
        <dbReference type="EC" id="4.3.1.18"/>
    </reaction>
</comment>
<comment type="cofactor">
    <cofactor evidence="1">
        <name>pyridoxal 5'-phosphate</name>
        <dbReference type="ChEBI" id="CHEBI:597326"/>
    </cofactor>
</comment>
<comment type="similarity">
    <text evidence="1">Belongs to the serine/threonine dehydratase family. DsdA subfamily.</text>
</comment>
<dbReference type="EC" id="4.3.1.18" evidence="1"/>
<dbReference type="EMBL" id="CP000744">
    <property type="protein sequence ID" value="ABR83447.1"/>
    <property type="molecule type" value="Genomic_DNA"/>
</dbReference>
<dbReference type="RefSeq" id="WP_012074892.1">
    <property type="nucleotide sequence ID" value="NC_009656.1"/>
</dbReference>
<dbReference type="SMR" id="A6V271"/>
<dbReference type="KEGG" id="pap:PSPA7_1773"/>
<dbReference type="HOGENOM" id="CLU_035707_0_0_6"/>
<dbReference type="Proteomes" id="UP000001582">
    <property type="component" value="Chromosome"/>
</dbReference>
<dbReference type="GO" id="GO:0008721">
    <property type="term" value="F:D-serine ammonia-lyase activity"/>
    <property type="evidence" value="ECO:0007669"/>
    <property type="project" value="UniProtKB-EC"/>
</dbReference>
<dbReference type="GO" id="GO:0016836">
    <property type="term" value="F:hydro-lyase activity"/>
    <property type="evidence" value="ECO:0007669"/>
    <property type="project" value="UniProtKB-UniRule"/>
</dbReference>
<dbReference type="GO" id="GO:0030170">
    <property type="term" value="F:pyridoxal phosphate binding"/>
    <property type="evidence" value="ECO:0007669"/>
    <property type="project" value="InterPro"/>
</dbReference>
<dbReference type="GO" id="GO:0036088">
    <property type="term" value="P:D-serine catabolic process"/>
    <property type="evidence" value="ECO:0007669"/>
    <property type="project" value="TreeGrafter"/>
</dbReference>
<dbReference type="GO" id="GO:0009097">
    <property type="term" value="P:isoleucine biosynthetic process"/>
    <property type="evidence" value="ECO:0007669"/>
    <property type="project" value="TreeGrafter"/>
</dbReference>
<dbReference type="Gene3D" id="3.40.50.1100">
    <property type="match status" value="2"/>
</dbReference>
<dbReference type="HAMAP" id="MF_01030">
    <property type="entry name" value="D_Ser_dehydrat"/>
    <property type="match status" value="1"/>
</dbReference>
<dbReference type="InterPro" id="IPR011780">
    <property type="entry name" value="D_Ser_am_lyase"/>
</dbReference>
<dbReference type="InterPro" id="IPR050147">
    <property type="entry name" value="Ser/Thr_Dehydratase"/>
</dbReference>
<dbReference type="InterPro" id="IPR000634">
    <property type="entry name" value="Ser/Thr_deHydtase_PyrdxlP-BS"/>
</dbReference>
<dbReference type="InterPro" id="IPR001926">
    <property type="entry name" value="TrpB-like_PALP"/>
</dbReference>
<dbReference type="InterPro" id="IPR036052">
    <property type="entry name" value="TrpB-like_PALP_sf"/>
</dbReference>
<dbReference type="NCBIfam" id="TIGR02035">
    <property type="entry name" value="D_Ser_am_lyase"/>
    <property type="match status" value="1"/>
</dbReference>
<dbReference type="NCBIfam" id="NF002823">
    <property type="entry name" value="PRK02991.1"/>
    <property type="match status" value="1"/>
</dbReference>
<dbReference type="PANTHER" id="PTHR48078:SF9">
    <property type="entry name" value="D-SERINE DEHYDRATASE"/>
    <property type="match status" value="1"/>
</dbReference>
<dbReference type="PANTHER" id="PTHR48078">
    <property type="entry name" value="THREONINE DEHYDRATASE, MITOCHONDRIAL-RELATED"/>
    <property type="match status" value="1"/>
</dbReference>
<dbReference type="Pfam" id="PF00291">
    <property type="entry name" value="PALP"/>
    <property type="match status" value="1"/>
</dbReference>
<dbReference type="SUPFAM" id="SSF53686">
    <property type="entry name" value="Tryptophan synthase beta subunit-like PLP-dependent enzymes"/>
    <property type="match status" value="1"/>
</dbReference>
<dbReference type="PROSITE" id="PS00165">
    <property type="entry name" value="DEHYDRATASE_SER_THR"/>
    <property type="match status" value="1"/>
</dbReference>
<protein>
    <recommendedName>
        <fullName evidence="1">Probable D-serine dehydratase</fullName>
        <ecNumber evidence="1">4.3.1.18</ecNumber>
    </recommendedName>
    <alternativeName>
        <fullName evidence="1">D-serine deaminase</fullName>
        <shortName evidence="1">DSD</shortName>
    </alternativeName>
</protein>
<gene>
    <name evidence="1" type="primary">dsdA</name>
    <name type="ordered locus">PSPA7_1773</name>
</gene>
<name>SDHD_PSEP7</name>
<proteinExistence type="inferred from homology"/>
<accession>A6V271</accession>
<sequence length="448" mass="48053">MILGTPKADWLAEFPRLADLIALRPSEWFNPAIAPSAEALADVGLGAADVADASARLQRFAPLIARLFPETAGSGGIIESDLVEVADFHDALRQHYAAELPGRLWLKRDSHLPISGSIKARGGIYEVLAHAERLALENGLVGLDDDYSRLAEPDCRAFFAGHRIAVGSTGNLGLSIGIIGAALGFQASVHMSADARQWKKDKLRAHGVTVVEYASDYSVAVEQGRREAAGDPYTHFVDDENSRDLFLGYAVAAERLRGQLDAAGIRVDSEHPLFVHLPCGVGGGPGGVAFGLKLAFGDAVHCLFAEPTHSPCMFLGVYTGRHEQVSVQDFGIDNRTAADGLAVGRPSGFVGRAMQRLLDGYYTVDDDELFRLLALLERSQGIRLEPSALAGAPGIARVTREPQGYRERMGLTSARLANATHLVWATGGGMVPEAEMHAYLERGRALLD</sequence>
<feature type="chain" id="PRO_1000063713" description="Probable D-serine dehydratase">
    <location>
        <begin position="1"/>
        <end position="448"/>
    </location>
</feature>
<feature type="modified residue" description="N6-(pyridoxal phosphate)lysine" evidence="1">
    <location>
        <position position="119"/>
    </location>
</feature>
<organism>
    <name type="scientific">Pseudomonas paraeruginosa (strain DSM 24068 / PA7)</name>
    <name type="common">Pseudomonas aeruginosa (strain PA7)</name>
    <dbReference type="NCBI Taxonomy" id="381754"/>
    <lineage>
        <taxon>Bacteria</taxon>
        <taxon>Pseudomonadati</taxon>
        <taxon>Pseudomonadota</taxon>
        <taxon>Gammaproteobacteria</taxon>
        <taxon>Pseudomonadales</taxon>
        <taxon>Pseudomonadaceae</taxon>
        <taxon>Pseudomonas</taxon>
        <taxon>Pseudomonas paraeruginosa</taxon>
    </lineage>
</organism>
<keyword id="KW-0456">Lyase</keyword>
<keyword id="KW-0663">Pyridoxal phosphate</keyword>
<reference key="1">
    <citation type="submission" date="2007-06" db="EMBL/GenBank/DDBJ databases">
        <authorList>
            <person name="Dodson R.J."/>
            <person name="Harkins D."/>
            <person name="Paulsen I.T."/>
        </authorList>
    </citation>
    <scope>NUCLEOTIDE SEQUENCE [LARGE SCALE GENOMIC DNA]</scope>
    <source>
        <strain>DSM 24068 / PA7</strain>
    </source>
</reference>
<evidence type="ECO:0000255" key="1">
    <source>
        <dbReference type="HAMAP-Rule" id="MF_01030"/>
    </source>
</evidence>